<feature type="chain" id="PRO_1000055008" description="Small ribosomal subunit protein uS17">
    <location>
        <begin position="1"/>
        <end position="80"/>
    </location>
</feature>
<proteinExistence type="inferred from homology"/>
<evidence type="ECO:0000255" key="1">
    <source>
        <dbReference type="HAMAP-Rule" id="MF_01345"/>
    </source>
</evidence>
<evidence type="ECO:0000305" key="2"/>
<accession>A4WVJ9</accession>
<dbReference type="EMBL" id="CP000661">
    <property type="protein sequence ID" value="ABP71413.1"/>
    <property type="molecule type" value="Genomic_DNA"/>
</dbReference>
<dbReference type="SMR" id="A4WVJ9"/>
<dbReference type="STRING" id="349102.Rsph17025_2525"/>
<dbReference type="KEGG" id="rsq:Rsph17025_2525"/>
<dbReference type="eggNOG" id="COG0186">
    <property type="taxonomic scope" value="Bacteria"/>
</dbReference>
<dbReference type="HOGENOM" id="CLU_073626_1_1_5"/>
<dbReference type="BioCyc" id="RSPH349102:G1G8M-2603-MONOMER"/>
<dbReference type="GO" id="GO:0022627">
    <property type="term" value="C:cytosolic small ribosomal subunit"/>
    <property type="evidence" value="ECO:0007669"/>
    <property type="project" value="TreeGrafter"/>
</dbReference>
<dbReference type="GO" id="GO:0019843">
    <property type="term" value="F:rRNA binding"/>
    <property type="evidence" value="ECO:0007669"/>
    <property type="project" value="UniProtKB-UniRule"/>
</dbReference>
<dbReference type="GO" id="GO:0003735">
    <property type="term" value="F:structural constituent of ribosome"/>
    <property type="evidence" value="ECO:0007669"/>
    <property type="project" value="InterPro"/>
</dbReference>
<dbReference type="GO" id="GO:0006412">
    <property type="term" value="P:translation"/>
    <property type="evidence" value="ECO:0007669"/>
    <property type="project" value="UniProtKB-UniRule"/>
</dbReference>
<dbReference type="CDD" id="cd00364">
    <property type="entry name" value="Ribosomal_uS17"/>
    <property type="match status" value="1"/>
</dbReference>
<dbReference type="Gene3D" id="2.40.50.140">
    <property type="entry name" value="Nucleic acid-binding proteins"/>
    <property type="match status" value="1"/>
</dbReference>
<dbReference type="HAMAP" id="MF_01345_B">
    <property type="entry name" value="Ribosomal_uS17_B"/>
    <property type="match status" value="1"/>
</dbReference>
<dbReference type="InterPro" id="IPR012340">
    <property type="entry name" value="NA-bd_OB-fold"/>
</dbReference>
<dbReference type="InterPro" id="IPR000266">
    <property type="entry name" value="Ribosomal_uS17"/>
</dbReference>
<dbReference type="InterPro" id="IPR019984">
    <property type="entry name" value="Ribosomal_uS17_bact/chlr"/>
</dbReference>
<dbReference type="NCBIfam" id="NF004123">
    <property type="entry name" value="PRK05610.1"/>
    <property type="match status" value="1"/>
</dbReference>
<dbReference type="NCBIfam" id="TIGR03635">
    <property type="entry name" value="uS17_bact"/>
    <property type="match status" value="1"/>
</dbReference>
<dbReference type="PANTHER" id="PTHR10744">
    <property type="entry name" value="40S RIBOSOMAL PROTEIN S11 FAMILY MEMBER"/>
    <property type="match status" value="1"/>
</dbReference>
<dbReference type="PANTHER" id="PTHR10744:SF1">
    <property type="entry name" value="SMALL RIBOSOMAL SUBUNIT PROTEIN US17M"/>
    <property type="match status" value="1"/>
</dbReference>
<dbReference type="Pfam" id="PF00366">
    <property type="entry name" value="Ribosomal_S17"/>
    <property type="match status" value="1"/>
</dbReference>
<dbReference type="PRINTS" id="PR00973">
    <property type="entry name" value="RIBOSOMALS17"/>
</dbReference>
<dbReference type="SUPFAM" id="SSF50249">
    <property type="entry name" value="Nucleic acid-binding proteins"/>
    <property type="match status" value="1"/>
</dbReference>
<name>RS17_CERS5</name>
<gene>
    <name evidence="1" type="primary">rpsQ</name>
    <name type="ordered locus">Rsph17025_2525</name>
</gene>
<keyword id="KW-0687">Ribonucleoprotein</keyword>
<keyword id="KW-0689">Ribosomal protein</keyword>
<keyword id="KW-0694">RNA-binding</keyword>
<keyword id="KW-0699">rRNA-binding</keyword>
<sequence>MPKRILQGTVTSDKNEQTVTVLVERRFKHPLLKKTVRLSKKYRAHDPENQFKVGDVVRIEECAPISKTKRWKVVTEAVTA</sequence>
<organism>
    <name type="scientific">Cereibacter sphaeroides (strain ATCC 17025 / ATH 2.4.3)</name>
    <name type="common">Rhodobacter sphaeroides</name>
    <dbReference type="NCBI Taxonomy" id="349102"/>
    <lineage>
        <taxon>Bacteria</taxon>
        <taxon>Pseudomonadati</taxon>
        <taxon>Pseudomonadota</taxon>
        <taxon>Alphaproteobacteria</taxon>
        <taxon>Rhodobacterales</taxon>
        <taxon>Paracoccaceae</taxon>
        <taxon>Cereibacter</taxon>
    </lineage>
</organism>
<protein>
    <recommendedName>
        <fullName evidence="1">Small ribosomal subunit protein uS17</fullName>
    </recommendedName>
    <alternativeName>
        <fullName evidence="2">30S ribosomal protein S17</fullName>
    </alternativeName>
</protein>
<reference key="1">
    <citation type="submission" date="2007-04" db="EMBL/GenBank/DDBJ databases">
        <title>Complete sequence of chromosome of Rhodobacter sphaeroides ATCC 17025.</title>
        <authorList>
            <consortium name="US DOE Joint Genome Institute"/>
            <person name="Copeland A."/>
            <person name="Lucas S."/>
            <person name="Lapidus A."/>
            <person name="Barry K."/>
            <person name="Detter J.C."/>
            <person name="Glavina del Rio T."/>
            <person name="Hammon N."/>
            <person name="Israni S."/>
            <person name="Dalin E."/>
            <person name="Tice H."/>
            <person name="Pitluck S."/>
            <person name="Chertkov O."/>
            <person name="Brettin T."/>
            <person name="Bruce D."/>
            <person name="Han C."/>
            <person name="Schmutz J."/>
            <person name="Larimer F."/>
            <person name="Land M."/>
            <person name="Hauser L."/>
            <person name="Kyrpides N."/>
            <person name="Kim E."/>
            <person name="Richardson P."/>
            <person name="Mackenzie C."/>
            <person name="Choudhary M."/>
            <person name="Donohue T.J."/>
            <person name="Kaplan S."/>
        </authorList>
    </citation>
    <scope>NUCLEOTIDE SEQUENCE [LARGE SCALE GENOMIC DNA]</scope>
    <source>
        <strain>ATCC 17025 / ATH 2.4.3</strain>
    </source>
</reference>
<comment type="function">
    <text evidence="1">One of the primary rRNA binding proteins, it binds specifically to the 5'-end of 16S ribosomal RNA.</text>
</comment>
<comment type="subunit">
    <text evidence="1">Part of the 30S ribosomal subunit.</text>
</comment>
<comment type="similarity">
    <text evidence="1">Belongs to the universal ribosomal protein uS17 family.</text>
</comment>